<proteinExistence type="predicted"/>
<keyword id="KW-0040">ANK repeat</keyword>
<keyword id="KW-0175">Coiled coil</keyword>
<keyword id="KW-1185">Reference proteome</keyword>
<keyword id="KW-0677">Repeat</keyword>
<dbReference type="EMBL" id="AC105219">
    <property type="status" value="NOT_ANNOTATED_CDS"/>
    <property type="molecule type" value="Genomic_DNA"/>
</dbReference>
<dbReference type="CCDS" id="CCDS94353.1"/>
<dbReference type="RefSeq" id="NP_001368803.1">
    <property type="nucleotide sequence ID" value="NM_001381874.1"/>
</dbReference>
<dbReference type="SMR" id="A8MXQ7"/>
<dbReference type="FunCoup" id="A8MXQ7">
    <property type="interactions" value="41"/>
</dbReference>
<dbReference type="IntAct" id="A8MXQ7">
    <property type="interactions" value="1"/>
</dbReference>
<dbReference type="MINT" id="A8MXQ7"/>
<dbReference type="STRING" id="9606.ENSP00000489685"/>
<dbReference type="GlyGen" id="A8MXQ7">
    <property type="glycosylation" value="2 sites, 1 O-linked glycan (1 site)"/>
</dbReference>
<dbReference type="PhosphoSitePlus" id="A8MXQ7"/>
<dbReference type="BioMuta" id="-"/>
<dbReference type="BioMuta" id="IQANK1"/>
<dbReference type="jPOST" id="A8MXQ7"/>
<dbReference type="MassIVE" id="A8MXQ7"/>
<dbReference type="Ensembl" id="ENST00000527139.7">
    <property type="protein sequence ID" value="ENSP00000489685.1"/>
    <property type="gene ID" value="ENSG00000203499.12"/>
</dbReference>
<dbReference type="GeneID" id="642574"/>
<dbReference type="MANE-Select" id="ENST00000527139.7">
    <property type="protein sequence ID" value="ENSP00000489685.1"/>
    <property type="RefSeq nucleotide sequence ID" value="NM_001381874.1"/>
    <property type="RefSeq protein sequence ID" value="NP_001368803.1"/>
</dbReference>
<dbReference type="AGR" id="HGNC:49576"/>
<dbReference type="GeneCards" id="IQANK1"/>
<dbReference type="HGNC" id="HGNC:49576">
    <property type="gene designation" value="IQANK1"/>
</dbReference>
<dbReference type="HPA" id="ENSG00000203499">
    <property type="expression patterns" value="Tissue enhanced (esophagus, skin)"/>
</dbReference>
<dbReference type="MIM" id="618942">
    <property type="type" value="gene"/>
</dbReference>
<dbReference type="neXtProt" id="NX_A8MXQ7"/>
<dbReference type="OpenTargets" id="ENSG00000203499"/>
<dbReference type="VEuPathDB" id="HostDB:ENSG00000203499"/>
<dbReference type="GeneTree" id="ENSGT00390000010763"/>
<dbReference type="InParanoid" id="A8MXQ7"/>
<dbReference type="OMA" id="SEHDRCQ"/>
<dbReference type="PAN-GO" id="A8MXQ7">
    <property type="GO annotations" value="3 GO annotations based on evolutionary models"/>
</dbReference>
<dbReference type="PathwayCommons" id="A8MXQ7"/>
<dbReference type="SignaLink" id="A8MXQ7"/>
<dbReference type="ChiTaRS" id="IQANK1">
    <property type="organism name" value="human"/>
</dbReference>
<dbReference type="Pharos" id="A8MXQ7">
    <property type="development level" value="Tdark"/>
</dbReference>
<dbReference type="PRO" id="PR:A8MXQ7"/>
<dbReference type="Proteomes" id="UP000005640">
    <property type="component" value="Chromosome 8"/>
</dbReference>
<dbReference type="RNAct" id="A8MXQ7">
    <property type="molecule type" value="protein"/>
</dbReference>
<dbReference type="Bgee" id="ENSG00000203499">
    <property type="expression patterns" value="Expressed in right uterine tube and 97 other cell types or tissues"/>
</dbReference>
<dbReference type="ExpressionAtlas" id="A8MXQ7">
    <property type="expression patterns" value="baseline and differential"/>
</dbReference>
<dbReference type="Gene3D" id="1.25.40.20">
    <property type="entry name" value="Ankyrin repeat-containing domain"/>
    <property type="match status" value="1"/>
</dbReference>
<dbReference type="Gene3D" id="3.40.50.300">
    <property type="entry name" value="P-loop containing nucleotide triphosphate hydrolases"/>
    <property type="match status" value="1"/>
</dbReference>
<dbReference type="InterPro" id="IPR002110">
    <property type="entry name" value="Ankyrin_rpt"/>
</dbReference>
<dbReference type="InterPro" id="IPR036770">
    <property type="entry name" value="Ankyrin_rpt-contain_sf"/>
</dbReference>
<dbReference type="InterPro" id="IPR027417">
    <property type="entry name" value="P-loop_NTPase"/>
</dbReference>
<dbReference type="PANTHER" id="PTHR24171:SF9">
    <property type="entry name" value="ANKYRIN REPEAT DOMAIN-CONTAINING PROTEIN 39"/>
    <property type="match status" value="1"/>
</dbReference>
<dbReference type="PANTHER" id="PTHR24171">
    <property type="entry name" value="ANKYRIN REPEAT DOMAIN-CONTAINING PROTEIN 39-RELATED"/>
    <property type="match status" value="1"/>
</dbReference>
<dbReference type="Pfam" id="PF00023">
    <property type="entry name" value="Ank"/>
    <property type="match status" value="1"/>
</dbReference>
<dbReference type="SMART" id="SM00248">
    <property type="entry name" value="ANK"/>
    <property type="match status" value="2"/>
</dbReference>
<dbReference type="SUPFAM" id="SSF48403">
    <property type="entry name" value="Ankyrin repeat"/>
    <property type="match status" value="1"/>
</dbReference>
<dbReference type="PROSITE" id="PS50297">
    <property type="entry name" value="ANK_REP_REGION"/>
    <property type="match status" value="1"/>
</dbReference>
<dbReference type="PROSITE" id="PS50088">
    <property type="entry name" value="ANK_REPEAT"/>
    <property type="match status" value="1"/>
</dbReference>
<dbReference type="PROSITE" id="PS50096">
    <property type="entry name" value="IQ"/>
    <property type="match status" value="1"/>
</dbReference>
<sequence>MDSKKGRPKAAAGKWQTLHPGPKTRAAAGKPGENRPPQRKAGWQAREPASAESPQAPTGPAEDRAARAIQGAFRQLRARRELARRREERREYLEQMETPQKEAYLAPVRREQEAARRLREQEEAAQRERREELQRRRRLLDAAFDGDVGEIRAVLKEVEQLLTREGVGHDEAGEARRLQRRVALAECEDSYGNTPLSEAAAGGQPLAIQLRAELGASPNSKGAFGPTPLYRAAFGGHLAAVEVLLKLGADPRVYAEDGSTPERVASLDTVVSVLRSWDLSLTEAMLQNMEAEQQRRAQEAQRHKEAEAERCGSMTLKVQQLTREQQQCHKELQQAYCELSRRISEHDQCEWRCMDKTKLTLQAIKDTEAQVDRLRQEAQKAEEALAMARLELREQTQEGEEEAPGLKCQVTELHDVLMKDVGNRIRADGRWPLVIDPLGQAATFLRYQDTNYVDTVNPEPLRPETMWLALLGALRYGKPLVFDLREEDLFPVVQRQLEAVQERYLSLLRPTDGPEYSPTQFQEQRLEHFRLFFVTKVQWPPAEQLQVLLPVRVQLPGTGL</sequence>
<feature type="chain" id="PRO_0000343881" description="IQ motif and ankyrin repeat domain-containing protein 1">
    <location>
        <begin position="1"/>
        <end position="560"/>
    </location>
</feature>
<feature type="domain" description="IQ" evidence="2">
    <location>
        <begin position="62"/>
        <end position="91"/>
    </location>
</feature>
<feature type="repeat" description="ANK 1" evidence="1">
    <location>
        <begin position="191"/>
        <end position="223"/>
    </location>
</feature>
<feature type="repeat" description="ANK 2" evidence="1">
    <location>
        <begin position="224"/>
        <end position="253"/>
    </location>
</feature>
<feature type="region of interest" description="Disordered" evidence="3">
    <location>
        <begin position="1"/>
        <end position="72"/>
    </location>
</feature>
<feature type="coiled-coil region" evidence="1">
    <location>
        <begin position="281"/>
        <end position="398"/>
    </location>
</feature>
<feature type="sequence variant" id="VAR_044540" description="In dbSNP:rs4875053.">
    <original>T</original>
    <variation>R</variation>
    <location>
        <position position="465"/>
    </location>
</feature>
<evidence type="ECO:0000255" key="1"/>
<evidence type="ECO:0000255" key="2">
    <source>
        <dbReference type="PROSITE-ProRule" id="PRU00116"/>
    </source>
</evidence>
<evidence type="ECO:0000256" key="3">
    <source>
        <dbReference type="SAM" id="MobiDB-lite"/>
    </source>
</evidence>
<evidence type="ECO:0000305" key="4"/>
<evidence type="ECO:0000312" key="5">
    <source>
        <dbReference type="HGNC" id="HGNC:49576"/>
    </source>
</evidence>
<name>IQAK1_HUMAN</name>
<organism>
    <name type="scientific">Homo sapiens</name>
    <name type="common">Human</name>
    <dbReference type="NCBI Taxonomy" id="9606"/>
    <lineage>
        <taxon>Eukaryota</taxon>
        <taxon>Metazoa</taxon>
        <taxon>Chordata</taxon>
        <taxon>Craniata</taxon>
        <taxon>Vertebrata</taxon>
        <taxon>Euteleostomi</taxon>
        <taxon>Mammalia</taxon>
        <taxon>Eutheria</taxon>
        <taxon>Euarchontoglires</taxon>
        <taxon>Primates</taxon>
        <taxon>Haplorrhini</taxon>
        <taxon>Catarrhini</taxon>
        <taxon>Hominidae</taxon>
        <taxon>Homo</taxon>
    </lineage>
</organism>
<gene>
    <name evidence="5" type="primary">IQANK1</name>
</gene>
<protein>
    <recommendedName>
        <fullName evidence="4">IQ motif and ankyrin repeat domain-containing protein 1</fullName>
    </recommendedName>
</protein>
<reference key="1">
    <citation type="journal article" date="2006" name="Nature">
        <title>DNA sequence and analysis of human chromosome 8.</title>
        <authorList>
            <person name="Nusbaum C."/>
            <person name="Mikkelsen T.S."/>
            <person name="Zody M.C."/>
            <person name="Asakawa S."/>
            <person name="Taudien S."/>
            <person name="Garber M."/>
            <person name="Kodira C.D."/>
            <person name="Schueler M.G."/>
            <person name="Shimizu A."/>
            <person name="Whittaker C.A."/>
            <person name="Chang J.L."/>
            <person name="Cuomo C.A."/>
            <person name="Dewar K."/>
            <person name="FitzGerald M.G."/>
            <person name="Yang X."/>
            <person name="Allen N.R."/>
            <person name="Anderson S."/>
            <person name="Asakawa T."/>
            <person name="Blechschmidt K."/>
            <person name="Bloom T."/>
            <person name="Borowsky M.L."/>
            <person name="Butler J."/>
            <person name="Cook A."/>
            <person name="Corum B."/>
            <person name="DeArellano K."/>
            <person name="DeCaprio D."/>
            <person name="Dooley K.T."/>
            <person name="Dorris L. III"/>
            <person name="Engels R."/>
            <person name="Gloeckner G."/>
            <person name="Hafez N."/>
            <person name="Hagopian D.S."/>
            <person name="Hall J.L."/>
            <person name="Ishikawa S.K."/>
            <person name="Jaffe D.B."/>
            <person name="Kamat A."/>
            <person name="Kudoh J."/>
            <person name="Lehmann R."/>
            <person name="Lokitsang T."/>
            <person name="Macdonald P."/>
            <person name="Major J.E."/>
            <person name="Matthews C.D."/>
            <person name="Mauceli E."/>
            <person name="Menzel U."/>
            <person name="Mihalev A.H."/>
            <person name="Minoshima S."/>
            <person name="Murayama Y."/>
            <person name="Naylor J.W."/>
            <person name="Nicol R."/>
            <person name="Nguyen C."/>
            <person name="O'Leary S.B."/>
            <person name="O'Neill K."/>
            <person name="Parker S.C.J."/>
            <person name="Polley A."/>
            <person name="Raymond C.K."/>
            <person name="Reichwald K."/>
            <person name="Rodriguez J."/>
            <person name="Sasaki T."/>
            <person name="Schilhabel M."/>
            <person name="Siddiqui R."/>
            <person name="Smith C.L."/>
            <person name="Sneddon T.P."/>
            <person name="Talamas J.A."/>
            <person name="Tenzin P."/>
            <person name="Topham K."/>
            <person name="Venkataraman V."/>
            <person name="Wen G."/>
            <person name="Yamazaki S."/>
            <person name="Young S.K."/>
            <person name="Zeng Q."/>
            <person name="Zimmer A.R."/>
            <person name="Rosenthal A."/>
            <person name="Birren B.W."/>
            <person name="Platzer M."/>
            <person name="Shimizu N."/>
            <person name="Lander E.S."/>
        </authorList>
    </citation>
    <scope>NUCLEOTIDE SEQUENCE [LARGE SCALE GENOMIC DNA]</scope>
</reference>
<accession>A8MXQ7</accession>
<accession>A0A1B0GTG1</accession>